<reference key="1">
    <citation type="journal article" date="2003" name="Proc. Natl. Acad. Sci. U.S.A.">
        <title>The complete genome sequence of Mycobacterium bovis.</title>
        <authorList>
            <person name="Garnier T."/>
            <person name="Eiglmeier K."/>
            <person name="Camus J.-C."/>
            <person name="Medina N."/>
            <person name="Mansoor H."/>
            <person name="Pryor M."/>
            <person name="Duthoy S."/>
            <person name="Grondin S."/>
            <person name="Lacroix C."/>
            <person name="Monsempe C."/>
            <person name="Simon S."/>
            <person name="Harris B."/>
            <person name="Atkin R."/>
            <person name="Doggett J."/>
            <person name="Mayes R."/>
            <person name="Keating L."/>
            <person name="Wheeler P.R."/>
            <person name="Parkhill J."/>
            <person name="Barrell B.G."/>
            <person name="Cole S.T."/>
            <person name="Gordon S.V."/>
            <person name="Hewinson R.G."/>
        </authorList>
    </citation>
    <scope>NUCLEOTIDE SEQUENCE [LARGE SCALE GENOMIC DNA]</scope>
    <source>
        <strain>ATCC BAA-935 / AF2122/97</strain>
    </source>
</reference>
<reference key="2">
    <citation type="journal article" date="2017" name="Genome Announc.">
        <title>Updated reference genome sequence and annotation of Mycobacterium bovis AF2122/97.</title>
        <authorList>
            <person name="Malone K.M."/>
            <person name="Farrell D."/>
            <person name="Stuber T.P."/>
            <person name="Schubert O.T."/>
            <person name="Aebersold R."/>
            <person name="Robbe-Austerman S."/>
            <person name="Gordon S.V."/>
        </authorList>
    </citation>
    <scope>NUCLEOTIDE SEQUENCE [LARGE SCALE GENOMIC DNA]</scope>
    <scope>GENOME REANNOTATION</scope>
    <source>
        <strain>ATCC BAA-935 / AF2122/97</strain>
    </source>
</reference>
<organism>
    <name type="scientific">Mycobacterium bovis (strain ATCC BAA-935 / AF2122/97)</name>
    <dbReference type="NCBI Taxonomy" id="233413"/>
    <lineage>
        <taxon>Bacteria</taxon>
        <taxon>Bacillati</taxon>
        <taxon>Actinomycetota</taxon>
        <taxon>Actinomycetes</taxon>
        <taxon>Mycobacteriales</taxon>
        <taxon>Mycobacteriaceae</taxon>
        <taxon>Mycobacterium</taxon>
        <taxon>Mycobacterium tuberculosis complex</taxon>
    </lineage>
</organism>
<gene>
    <name type="ordered locus">BQ2027_MB2586C</name>
</gene>
<feature type="chain" id="PRO_0000088521" description="UPF0047 protein Mb2586c">
    <location>
        <begin position="1"/>
        <end position="129"/>
    </location>
</feature>
<dbReference type="EMBL" id="LT708304">
    <property type="protein sequence ID" value="SIU01204.1"/>
    <property type="molecule type" value="Genomic_DNA"/>
</dbReference>
<dbReference type="RefSeq" id="NP_856232.1">
    <property type="nucleotide sequence ID" value="NC_002945.3"/>
</dbReference>
<dbReference type="RefSeq" id="WP_003413208.1">
    <property type="nucleotide sequence ID" value="NC_002945.4"/>
</dbReference>
<dbReference type="SMR" id="P67122"/>
<dbReference type="KEGG" id="mbo:BQ2027_MB2586C"/>
<dbReference type="PATRIC" id="fig|233413.5.peg.2844"/>
<dbReference type="Proteomes" id="UP000001419">
    <property type="component" value="Chromosome"/>
</dbReference>
<dbReference type="FunFam" id="2.60.120.460:FF:000001">
    <property type="entry name" value="UPF0047 protein MT2633"/>
    <property type="match status" value="1"/>
</dbReference>
<dbReference type="Gene3D" id="2.60.120.460">
    <property type="entry name" value="YjbQ-like"/>
    <property type="match status" value="1"/>
</dbReference>
<dbReference type="InterPro" id="IPR001602">
    <property type="entry name" value="UPF0047_YjbQ-like"/>
</dbReference>
<dbReference type="InterPro" id="IPR035917">
    <property type="entry name" value="YjbQ-like_sf"/>
</dbReference>
<dbReference type="NCBIfam" id="TIGR00149">
    <property type="entry name" value="TIGR00149_YjbQ"/>
    <property type="match status" value="1"/>
</dbReference>
<dbReference type="PANTHER" id="PTHR30615">
    <property type="entry name" value="UNCHARACTERIZED PROTEIN YJBQ-RELATED"/>
    <property type="match status" value="1"/>
</dbReference>
<dbReference type="PANTHER" id="PTHR30615:SF8">
    <property type="entry name" value="UPF0047 PROTEIN C4A8.02C"/>
    <property type="match status" value="1"/>
</dbReference>
<dbReference type="Pfam" id="PF01894">
    <property type="entry name" value="UPF0047"/>
    <property type="match status" value="1"/>
</dbReference>
<dbReference type="PIRSF" id="PIRSF004681">
    <property type="entry name" value="UCP004681"/>
    <property type="match status" value="1"/>
</dbReference>
<dbReference type="SUPFAM" id="SSF111038">
    <property type="entry name" value="YjbQ-like"/>
    <property type="match status" value="1"/>
</dbReference>
<dbReference type="PROSITE" id="PS01314">
    <property type="entry name" value="UPF0047"/>
    <property type="match status" value="1"/>
</dbReference>
<proteinExistence type="inferred from homology"/>
<keyword id="KW-1185">Reference proteome</keyword>
<accession>P67122</accession>
<accession>A0A1R3Y1J2</accession>
<accession>Q50742</accession>
<accession>X2BL61</accession>
<comment type="similarity">
    <text evidence="1">Belongs to the UPF0047 family.</text>
</comment>
<sequence>MLDVDTARRRIVDLTDAVRAFCTAHDDGLCNVFVPHATAGVAIIETGAGSDEDLVDTLVRLLPRDDRYRHAHGSYGHGADHLLPAFVAPSVTVPVSGGQPLLGTWQSIVLVDLNQDNPRRSVRLSFVEG</sequence>
<protein>
    <recommendedName>
        <fullName>UPF0047 protein Mb2586c</fullName>
    </recommendedName>
</protein>
<evidence type="ECO:0000305" key="1"/>
<name>Y2586_MYCBO</name>